<proteinExistence type="inferred from homology"/>
<sequence length="132" mass="14909">MSMTDNVADMLTRIRNAYKSKLINVSFPSSKIKISILDVLQKEGYIKDYITTQKNNISYTEVALKYSVNGDASICEIHRVSKPGKRVYSPIKDLKGYYNNMGIYILSTPYGVMSDREAHIKNVGGEVICKVF</sequence>
<dbReference type="EMBL" id="CP000683">
    <property type="protein sequence ID" value="ABV85069.1"/>
    <property type="molecule type" value="Genomic_DNA"/>
</dbReference>
<dbReference type="RefSeq" id="WP_012153035.1">
    <property type="nucleotide sequence ID" value="NC_009900.1"/>
</dbReference>
<dbReference type="SMR" id="A8F2D3"/>
<dbReference type="KEGG" id="rms:RMA_1026"/>
<dbReference type="HOGENOM" id="CLU_098428_0_0_5"/>
<dbReference type="Proteomes" id="UP000001311">
    <property type="component" value="Chromosome"/>
</dbReference>
<dbReference type="GO" id="GO:1990904">
    <property type="term" value="C:ribonucleoprotein complex"/>
    <property type="evidence" value="ECO:0007669"/>
    <property type="project" value="UniProtKB-KW"/>
</dbReference>
<dbReference type="GO" id="GO:0005840">
    <property type="term" value="C:ribosome"/>
    <property type="evidence" value="ECO:0007669"/>
    <property type="project" value="UniProtKB-KW"/>
</dbReference>
<dbReference type="GO" id="GO:0019843">
    <property type="term" value="F:rRNA binding"/>
    <property type="evidence" value="ECO:0007669"/>
    <property type="project" value="UniProtKB-UniRule"/>
</dbReference>
<dbReference type="GO" id="GO:0003735">
    <property type="term" value="F:structural constituent of ribosome"/>
    <property type="evidence" value="ECO:0007669"/>
    <property type="project" value="InterPro"/>
</dbReference>
<dbReference type="GO" id="GO:0006412">
    <property type="term" value="P:translation"/>
    <property type="evidence" value="ECO:0007669"/>
    <property type="project" value="UniProtKB-UniRule"/>
</dbReference>
<dbReference type="FunFam" id="3.30.1370.30:FF:000002">
    <property type="entry name" value="30S ribosomal protein S8"/>
    <property type="match status" value="1"/>
</dbReference>
<dbReference type="FunFam" id="3.30.1490.10:FF:000001">
    <property type="entry name" value="30S ribosomal protein S8"/>
    <property type="match status" value="1"/>
</dbReference>
<dbReference type="Gene3D" id="3.30.1370.30">
    <property type="match status" value="1"/>
</dbReference>
<dbReference type="Gene3D" id="3.30.1490.10">
    <property type="match status" value="1"/>
</dbReference>
<dbReference type="HAMAP" id="MF_01302_B">
    <property type="entry name" value="Ribosomal_uS8_B"/>
    <property type="match status" value="1"/>
</dbReference>
<dbReference type="InterPro" id="IPR000630">
    <property type="entry name" value="Ribosomal_uS8"/>
</dbReference>
<dbReference type="InterPro" id="IPR047863">
    <property type="entry name" value="Ribosomal_uS8_CS"/>
</dbReference>
<dbReference type="InterPro" id="IPR035987">
    <property type="entry name" value="Ribosomal_uS8_sf"/>
</dbReference>
<dbReference type="NCBIfam" id="NF001109">
    <property type="entry name" value="PRK00136.1"/>
    <property type="match status" value="1"/>
</dbReference>
<dbReference type="PANTHER" id="PTHR11758">
    <property type="entry name" value="40S RIBOSOMAL PROTEIN S15A"/>
    <property type="match status" value="1"/>
</dbReference>
<dbReference type="Pfam" id="PF00410">
    <property type="entry name" value="Ribosomal_S8"/>
    <property type="match status" value="1"/>
</dbReference>
<dbReference type="SUPFAM" id="SSF56047">
    <property type="entry name" value="Ribosomal protein S8"/>
    <property type="match status" value="1"/>
</dbReference>
<dbReference type="PROSITE" id="PS00053">
    <property type="entry name" value="RIBOSOMAL_S8"/>
    <property type="match status" value="1"/>
</dbReference>
<gene>
    <name evidence="1" type="primary">rpsH</name>
    <name type="ordered locus">RMA_1026</name>
</gene>
<accession>A8F2D3</accession>
<evidence type="ECO:0000255" key="1">
    <source>
        <dbReference type="HAMAP-Rule" id="MF_01302"/>
    </source>
</evidence>
<evidence type="ECO:0000305" key="2"/>
<organism>
    <name type="scientific">Rickettsia massiliae (strain Mtu5)</name>
    <dbReference type="NCBI Taxonomy" id="416276"/>
    <lineage>
        <taxon>Bacteria</taxon>
        <taxon>Pseudomonadati</taxon>
        <taxon>Pseudomonadota</taxon>
        <taxon>Alphaproteobacteria</taxon>
        <taxon>Rickettsiales</taxon>
        <taxon>Rickettsiaceae</taxon>
        <taxon>Rickettsieae</taxon>
        <taxon>Rickettsia</taxon>
        <taxon>spotted fever group</taxon>
    </lineage>
</organism>
<protein>
    <recommendedName>
        <fullName evidence="1">Small ribosomal subunit protein uS8</fullName>
    </recommendedName>
    <alternativeName>
        <fullName evidence="2">30S ribosomal protein S8</fullName>
    </alternativeName>
</protein>
<keyword id="KW-0687">Ribonucleoprotein</keyword>
<keyword id="KW-0689">Ribosomal protein</keyword>
<keyword id="KW-0694">RNA-binding</keyword>
<keyword id="KW-0699">rRNA-binding</keyword>
<reference key="1">
    <citation type="journal article" date="2007" name="Genome Res.">
        <title>Lateral gene transfer between obligate intracellular bacteria: evidence from the Rickettsia massiliae genome.</title>
        <authorList>
            <person name="Blanc G."/>
            <person name="Ogata H."/>
            <person name="Robert C."/>
            <person name="Audic S."/>
            <person name="Claverie J.-M."/>
            <person name="Raoult D."/>
        </authorList>
    </citation>
    <scope>NUCLEOTIDE SEQUENCE [LARGE SCALE GENOMIC DNA]</scope>
    <source>
        <strain>Mtu5</strain>
    </source>
</reference>
<comment type="function">
    <text evidence="1">One of the primary rRNA binding proteins, it binds directly to 16S rRNA central domain where it helps coordinate assembly of the platform of the 30S subunit.</text>
</comment>
<comment type="subunit">
    <text evidence="1">Part of the 30S ribosomal subunit. Contacts proteins S5 and S12.</text>
</comment>
<comment type="similarity">
    <text evidence="1">Belongs to the universal ribosomal protein uS8 family.</text>
</comment>
<name>RS8_RICM5</name>
<feature type="chain" id="PRO_1000067490" description="Small ribosomal subunit protein uS8">
    <location>
        <begin position="1"/>
        <end position="132"/>
    </location>
</feature>